<organism>
    <name type="scientific">Nostoc punctiforme (strain ATCC 29133 / PCC 73102)</name>
    <dbReference type="NCBI Taxonomy" id="63737"/>
    <lineage>
        <taxon>Bacteria</taxon>
        <taxon>Bacillati</taxon>
        <taxon>Cyanobacteriota</taxon>
        <taxon>Cyanophyceae</taxon>
        <taxon>Nostocales</taxon>
        <taxon>Nostocaceae</taxon>
        <taxon>Nostoc</taxon>
    </lineage>
</organism>
<reference key="1">
    <citation type="journal article" date="2013" name="Plant Physiol.">
        <title>A Nostoc punctiforme Sugar Transporter Necessary to Establish a Cyanobacterium-Plant Symbiosis.</title>
        <authorList>
            <person name="Ekman M."/>
            <person name="Picossi S."/>
            <person name="Campbell E.L."/>
            <person name="Meeks J.C."/>
            <person name="Flores E."/>
        </authorList>
    </citation>
    <scope>NUCLEOTIDE SEQUENCE [LARGE SCALE GENOMIC DNA]</scope>
    <source>
        <strain>ATCC 29133 / PCC 73102</strain>
    </source>
</reference>
<accession>B2J055</accession>
<gene>
    <name evidence="1" type="primary">atpF2</name>
    <name evidence="1" type="synonym">atpG</name>
    <name type="ordered locus">Npun_F4860</name>
</gene>
<protein>
    <recommendedName>
        <fullName evidence="1">ATP synthase subunit b'</fullName>
    </recommendedName>
    <alternativeName>
        <fullName evidence="1">ATP synthase F(0) sector subunit b'</fullName>
    </alternativeName>
    <alternativeName>
        <fullName evidence="1">ATPase subunit II</fullName>
    </alternativeName>
    <alternativeName>
        <fullName evidence="1">F-type ATPase subunit b'</fullName>
        <shortName evidence="1">F-ATPase subunit b'</shortName>
    </alternativeName>
</protein>
<proteinExistence type="inferred from homology"/>
<keyword id="KW-0066">ATP synthesis</keyword>
<keyword id="KW-0138">CF(0)</keyword>
<keyword id="KW-0375">Hydrogen ion transport</keyword>
<keyword id="KW-0406">Ion transport</keyword>
<keyword id="KW-0472">Membrane</keyword>
<keyword id="KW-1185">Reference proteome</keyword>
<keyword id="KW-0793">Thylakoid</keyword>
<keyword id="KW-0812">Transmembrane</keyword>
<keyword id="KW-1133">Transmembrane helix</keyword>
<keyword id="KW-0813">Transport</keyword>
<comment type="function">
    <text evidence="1">F(1)F(0) ATP synthase produces ATP from ADP in the presence of a proton or sodium gradient. F-type ATPases consist of two structural domains, F(1) containing the extramembraneous catalytic core and F(0) containing the membrane proton channel, linked together by a central stalk and a peripheral stalk. During catalysis, ATP synthesis in the catalytic domain of F(1) is coupled via a rotary mechanism of the central stalk subunits to proton translocation.</text>
</comment>
<comment type="function">
    <text evidence="1">Component of the F(0) channel, it forms part of the peripheral stalk, linking F(1) to F(0). The b'-subunit is a diverged and duplicated form of b found in plants and photosynthetic bacteria.</text>
</comment>
<comment type="subunit">
    <text evidence="1">F-type ATPases have 2 components, F(1) - the catalytic core - and F(0) - the membrane proton channel. F(1) has five subunits: alpha(3), beta(3), gamma(1), delta(1), epsilon(1). F(0) has four main subunits: a(1), b(1), b'(1) and c(10-14). The alpha and beta chains form an alternating ring which encloses part of the gamma chain. F(1) is attached to F(0) by a central stalk formed by the gamma and epsilon chains, while a peripheral stalk is formed by the delta, b and b' chains.</text>
</comment>
<comment type="subcellular location">
    <subcellularLocation>
        <location evidence="1">Cellular thylakoid membrane</location>
        <topology evidence="1">Single-pass membrane protein</topology>
    </subcellularLocation>
</comment>
<comment type="similarity">
    <text evidence="1">Belongs to the ATPase B chain family.</text>
</comment>
<dbReference type="EMBL" id="CP001037">
    <property type="protein sequence ID" value="ACC83207.1"/>
    <property type="molecule type" value="Genomic_DNA"/>
</dbReference>
<dbReference type="RefSeq" id="WP_012411163.1">
    <property type="nucleotide sequence ID" value="NC_010628.1"/>
</dbReference>
<dbReference type="SMR" id="B2J055"/>
<dbReference type="STRING" id="63737.Npun_F4860"/>
<dbReference type="EnsemblBacteria" id="ACC83207">
    <property type="protein sequence ID" value="ACC83207"/>
    <property type="gene ID" value="Npun_F4860"/>
</dbReference>
<dbReference type="KEGG" id="npu:Npun_F4860"/>
<dbReference type="eggNOG" id="COG0711">
    <property type="taxonomic scope" value="Bacteria"/>
</dbReference>
<dbReference type="HOGENOM" id="CLU_079215_9_0_3"/>
<dbReference type="OrthoDB" id="426571at2"/>
<dbReference type="Proteomes" id="UP000001191">
    <property type="component" value="Chromosome"/>
</dbReference>
<dbReference type="GO" id="GO:0031676">
    <property type="term" value="C:plasma membrane-derived thylakoid membrane"/>
    <property type="evidence" value="ECO:0007669"/>
    <property type="project" value="UniProtKB-SubCell"/>
</dbReference>
<dbReference type="GO" id="GO:0045259">
    <property type="term" value="C:proton-transporting ATP synthase complex"/>
    <property type="evidence" value="ECO:0007669"/>
    <property type="project" value="UniProtKB-KW"/>
</dbReference>
<dbReference type="GO" id="GO:0046933">
    <property type="term" value="F:proton-transporting ATP synthase activity, rotational mechanism"/>
    <property type="evidence" value="ECO:0007669"/>
    <property type="project" value="UniProtKB-UniRule"/>
</dbReference>
<dbReference type="GO" id="GO:0046961">
    <property type="term" value="F:proton-transporting ATPase activity, rotational mechanism"/>
    <property type="evidence" value="ECO:0007669"/>
    <property type="project" value="TreeGrafter"/>
</dbReference>
<dbReference type="CDD" id="cd06503">
    <property type="entry name" value="ATP-synt_Fo_b"/>
    <property type="match status" value="1"/>
</dbReference>
<dbReference type="HAMAP" id="MF_01398">
    <property type="entry name" value="ATP_synth_b_bprime"/>
    <property type="match status" value="1"/>
</dbReference>
<dbReference type="HAMAP" id="MF_01399">
    <property type="entry name" value="ATP_synth_bprime"/>
    <property type="match status" value="1"/>
</dbReference>
<dbReference type="InterPro" id="IPR034679">
    <property type="entry name" value="ATP_synth_b"/>
</dbReference>
<dbReference type="InterPro" id="IPR028987">
    <property type="entry name" value="ATP_synth_B-like_membr_sf"/>
</dbReference>
<dbReference type="InterPro" id="IPR002146">
    <property type="entry name" value="ATP_synth_b/b'su_bac/chlpt"/>
</dbReference>
<dbReference type="InterPro" id="IPR050059">
    <property type="entry name" value="ATP_synthase_B_chain"/>
</dbReference>
<dbReference type="NCBIfam" id="NF005607">
    <property type="entry name" value="PRK07353.1"/>
    <property type="match status" value="1"/>
</dbReference>
<dbReference type="PANTHER" id="PTHR33445">
    <property type="entry name" value="ATP SYNTHASE SUBUNIT B', CHLOROPLASTIC"/>
    <property type="match status" value="1"/>
</dbReference>
<dbReference type="PANTHER" id="PTHR33445:SF2">
    <property type="entry name" value="ATP SYNTHASE SUBUNIT B', CHLOROPLASTIC"/>
    <property type="match status" value="1"/>
</dbReference>
<dbReference type="Pfam" id="PF00430">
    <property type="entry name" value="ATP-synt_B"/>
    <property type="match status" value="1"/>
</dbReference>
<dbReference type="SUPFAM" id="SSF81573">
    <property type="entry name" value="F1F0 ATP synthase subunit B, membrane domain"/>
    <property type="match status" value="1"/>
</dbReference>
<feature type="chain" id="PRO_0000369018" description="ATP synthase subunit b'">
    <location>
        <begin position="1"/>
        <end position="143"/>
    </location>
</feature>
<feature type="transmembrane region" description="Helical" evidence="1">
    <location>
        <begin position="6"/>
        <end position="26"/>
    </location>
</feature>
<name>ATPF2_NOSP7</name>
<sequence length="143" mass="16200">MFDFDATLPFMALQFLLLAAVLNAIFYKPLTKVLDDRDSYIRTNTLEARESLAKAERLATEYEQQLADARRQSQATVEAAQLEAKKITAEKIAEAQKEAQSQREQASVEIEQQKQQAFSTLEQQVDALSRQILEKLLGPTPVR</sequence>
<evidence type="ECO:0000255" key="1">
    <source>
        <dbReference type="HAMAP-Rule" id="MF_01399"/>
    </source>
</evidence>